<name>UNC4_CAEEL</name>
<feature type="chain" id="PRO_0000049347" description="Homeobox protein unc-4">
    <location>
        <begin position="1"/>
        <end position="252"/>
    </location>
</feature>
<feature type="DNA-binding region" description="Homeobox" evidence="1">
    <location>
        <begin position="88"/>
        <end position="147"/>
    </location>
</feature>
<feature type="region of interest" description="Disordered" evidence="2">
    <location>
        <begin position="43"/>
        <end position="68"/>
    </location>
</feature>
<feature type="region of interest" description="Disordered" evidence="2">
    <location>
        <begin position="143"/>
        <end position="164"/>
    </location>
</feature>
<feature type="compositionally biased region" description="Polar residues" evidence="2">
    <location>
        <begin position="43"/>
        <end position="59"/>
    </location>
</feature>
<feature type="compositionally biased region" description="Basic and acidic residues" evidence="2">
    <location>
        <begin position="155"/>
        <end position="164"/>
    </location>
</feature>
<feature type="mutagenesis site" description="In e2322ts; unable to crawl backwards. Phenotype is exacerbated in a lin-17 mutant background. Backward movement is restored in an egl-20 mutant background. Significant restoration of backward movement in a mig-1 mutant background, or by RNAi-mediated knockdown of mom-5." evidence="7 10">
    <original>L</original>
    <variation>F</variation>
    <location>
        <position position="121"/>
    </location>
</feature>
<feature type="mutagenesis site" description="In wdEx65; unable to crawl backwards. Abolishes interaction with unc-37." evidence="3">
    <original>F</original>
    <variation>E</variation>
    <location>
        <position position="174"/>
    </location>
</feature>
<feature type="mutagenesis site" description="In e26/e2307; unable to crawl backwards. Abolishes interaction with unc-37." evidence="3">
    <original>G</original>
    <variation>D</variation>
    <variation>S</variation>
    <location>
        <position position="188"/>
    </location>
</feature>
<feature type="mutagenesis site" description="In e2323; unable to crawl backwards. Abolishes interaction with unc-37. Backward movement is restored in an egl-20 mutant background." evidence="3 7">
    <original>R</original>
    <variation>Q</variation>
    <location>
        <position position="190"/>
    </location>
</feature>
<feature type="mutagenesis site" description="In e26/e2307; unable to crawl backwards. Abolishes interaction with unc-37." evidence="3">
    <original>R</original>
    <variation>K</variation>
    <location>
        <position position="197"/>
    </location>
</feature>
<proteinExistence type="evidence at protein level"/>
<gene>
    <name type="primary">unc-4</name>
    <name type="synonym">ceh-4</name>
    <name type="ORF">F26C11.2</name>
</gene>
<dbReference type="EMBL" id="Z47072">
    <property type="protein sequence ID" value="CAA87368.1"/>
    <property type="molecule type" value="Genomic_DNA"/>
</dbReference>
<dbReference type="EMBL" id="X64904">
    <property type="protein sequence ID" value="CAA46108.1"/>
    <property type="molecule type" value="mRNA"/>
</dbReference>
<dbReference type="PIR" id="T21388">
    <property type="entry name" value="T21388"/>
</dbReference>
<dbReference type="RefSeq" id="NP_496138.1">
    <property type="nucleotide sequence ID" value="NM_063737.2"/>
</dbReference>
<dbReference type="BioGRID" id="39866">
    <property type="interactions" value="1"/>
</dbReference>
<dbReference type="FunCoup" id="P29506">
    <property type="interactions" value="3"/>
</dbReference>
<dbReference type="STRING" id="6239.F26C11.2.1"/>
<dbReference type="PaxDb" id="6239-F26C11.2"/>
<dbReference type="EnsemblMetazoa" id="F26C11.2.1">
    <property type="protein sequence ID" value="F26C11.2.1"/>
    <property type="gene ID" value="WBGene00006744"/>
</dbReference>
<dbReference type="GeneID" id="174544"/>
<dbReference type="KEGG" id="cel:CELE_F26C11.2"/>
<dbReference type="UCSC" id="F26C11.2">
    <property type="organism name" value="c. elegans"/>
</dbReference>
<dbReference type="AGR" id="WB:WBGene00006744"/>
<dbReference type="CTD" id="32757"/>
<dbReference type="WormBase" id="F26C11.2">
    <property type="protein sequence ID" value="CE01560"/>
    <property type="gene ID" value="WBGene00006744"/>
    <property type="gene designation" value="unc-4"/>
</dbReference>
<dbReference type="eggNOG" id="KOG0490">
    <property type="taxonomic scope" value="Eukaryota"/>
</dbReference>
<dbReference type="GeneTree" id="ENSGT00940000167841"/>
<dbReference type="HOGENOM" id="CLU_084876_0_0_1"/>
<dbReference type="InParanoid" id="P29506"/>
<dbReference type="OMA" id="DIWNDFW"/>
<dbReference type="OrthoDB" id="6159439at2759"/>
<dbReference type="PhylomeDB" id="P29506"/>
<dbReference type="SignaLink" id="P29506"/>
<dbReference type="PRO" id="PR:P29506"/>
<dbReference type="Proteomes" id="UP000001940">
    <property type="component" value="Chromosome II"/>
</dbReference>
<dbReference type="Bgee" id="WBGene00006744">
    <property type="expression patterns" value="Expressed in pharyngeal muscle cell (C elegans) and 3 other cell types or tissues"/>
</dbReference>
<dbReference type="GO" id="GO:0030424">
    <property type="term" value="C:axon"/>
    <property type="evidence" value="ECO:0000314"/>
    <property type="project" value="WormBase"/>
</dbReference>
<dbReference type="GO" id="GO:0005634">
    <property type="term" value="C:nucleus"/>
    <property type="evidence" value="ECO:0000314"/>
    <property type="project" value="WormBase"/>
</dbReference>
<dbReference type="GO" id="GO:0003700">
    <property type="term" value="F:DNA-binding transcription factor activity"/>
    <property type="evidence" value="ECO:0000315"/>
    <property type="project" value="UniProtKB"/>
</dbReference>
<dbReference type="GO" id="GO:0000981">
    <property type="term" value="F:DNA-binding transcription factor activity, RNA polymerase II-specific"/>
    <property type="evidence" value="ECO:0000318"/>
    <property type="project" value="GO_Central"/>
</dbReference>
<dbReference type="GO" id="GO:0000977">
    <property type="term" value="F:RNA polymerase II transcription regulatory region sequence-specific DNA binding"/>
    <property type="evidence" value="ECO:0000318"/>
    <property type="project" value="GO_Central"/>
</dbReference>
<dbReference type="GO" id="GO:0001708">
    <property type="term" value="P:cell fate specification"/>
    <property type="evidence" value="ECO:0000315"/>
    <property type="project" value="UniProtKB"/>
</dbReference>
<dbReference type="GO" id="GO:0040011">
    <property type="term" value="P:locomotion"/>
    <property type="evidence" value="ECO:0000315"/>
    <property type="project" value="WormBase"/>
</dbReference>
<dbReference type="GO" id="GO:0090090">
    <property type="term" value="P:negative regulation of canonical Wnt signaling pathway"/>
    <property type="evidence" value="ECO:0000315"/>
    <property type="project" value="UniProtKB"/>
</dbReference>
<dbReference type="GO" id="GO:0000122">
    <property type="term" value="P:negative regulation of transcription by RNA polymerase II"/>
    <property type="evidence" value="ECO:0000315"/>
    <property type="project" value="UniProtKB"/>
</dbReference>
<dbReference type="GO" id="GO:0007400">
    <property type="term" value="P:neuroblast fate determination"/>
    <property type="evidence" value="ECO:0000315"/>
    <property type="project" value="WormBase"/>
</dbReference>
<dbReference type="GO" id="GO:0050770">
    <property type="term" value="P:regulation of axonogenesis"/>
    <property type="evidence" value="ECO:0000315"/>
    <property type="project" value="WormBase"/>
</dbReference>
<dbReference type="GO" id="GO:0006355">
    <property type="term" value="P:regulation of DNA-templated transcription"/>
    <property type="evidence" value="ECO:0000315"/>
    <property type="project" value="UniProtKB"/>
</dbReference>
<dbReference type="GO" id="GO:0050807">
    <property type="term" value="P:regulation of synapse organization"/>
    <property type="evidence" value="ECO:0000315"/>
    <property type="project" value="UniProtKB"/>
</dbReference>
<dbReference type="GO" id="GO:0050803">
    <property type="term" value="P:regulation of synapse structure or activity"/>
    <property type="evidence" value="ECO:0000315"/>
    <property type="project" value="UniProtKB"/>
</dbReference>
<dbReference type="GO" id="GO:0006357">
    <property type="term" value="P:regulation of transcription by RNA polymerase II"/>
    <property type="evidence" value="ECO:0000318"/>
    <property type="project" value="GO_Central"/>
</dbReference>
<dbReference type="GO" id="GO:0007416">
    <property type="term" value="P:synapse assembly"/>
    <property type="evidence" value="ECO:0000315"/>
    <property type="project" value="WormBase"/>
</dbReference>
<dbReference type="GO" id="GO:0008039">
    <property type="term" value="P:synaptic target recognition"/>
    <property type="evidence" value="ECO:0000315"/>
    <property type="project" value="UniProtKB"/>
</dbReference>
<dbReference type="GO" id="GO:0048489">
    <property type="term" value="P:synaptic vesicle transport"/>
    <property type="evidence" value="ECO:0000315"/>
    <property type="project" value="UniProtKB"/>
</dbReference>
<dbReference type="CDD" id="cd00086">
    <property type="entry name" value="homeodomain"/>
    <property type="match status" value="1"/>
</dbReference>
<dbReference type="FunFam" id="1.10.10.60:FF:000057">
    <property type="entry name" value="Short stature homeobox 2"/>
    <property type="match status" value="1"/>
</dbReference>
<dbReference type="Gene3D" id="1.10.10.60">
    <property type="entry name" value="Homeodomain-like"/>
    <property type="match status" value="1"/>
</dbReference>
<dbReference type="InterPro" id="IPR001356">
    <property type="entry name" value="HD"/>
</dbReference>
<dbReference type="InterPro" id="IPR017970">
    <property type="entry name" value="Homeobox_CS"/>
</dbReference>
<dbReference type="InterPro" id="IPR009057">
    <property type="entry name" value="Homeodomain-like_sf"/>
</dbReference>
<dbReference type="PANTHER" id="PTHR46799">
    <property type="entry name" value="HOMEOBOX PROTEIN UNC-4 HOMOLOG"/>
    <property type="match status" value="1"/>
</dbReference>
<dbReference type="PANTHER" id="PTHR46799:SF1">
    <property type="entry name" value="HOMEOBOX PROTEIN UNC-4 HOMOLOG"/>
    <property type="match status" value="1"/>
</dbReference>
<dbReference type="Pfam" id="PF00046">
    <property type="entry name" value="Homeodomain"/>
    <property type="match status" value="1"/>
</dbReference>
<dbReference type="SMART" id="SM00389">
    <property type="entry name" value="HOX"/>
    <property type="match status" value="1"/>
</dbReference>
<dbReference type="SUPFAM" id="SSF46689">
    <property type="entry name" value="Homeodomain-like"/>
    <property type="match status" value="1"/>
</dbReference>
<dbReference type="PROSITE" id="PS00027">
    <property type="entry name" value="HOMEOBOX_1"/>
    <property type="match status" value="1"/>
</dbReference>
<dbReference type="PROSITE" id="PS50071">
    <property type="entry name" value="HOMEOBOX_2"/>
    <property type="match status" value="1"/>
</dbReference>
<reference key="1">
    <citation type="journal article" date="1998" name="Science">
        <title>Genome sequence of the nematode C. elegans: a platform for investigating biology.</title>
        <authorList>
            <consortium name="The C. elegans sequencing consortium"/>
        </authorList>
    </citation>
    <scope>NUCLEOTIDE SEQUENCE [LARGE SCALE GENOMIC DNA]</scope>
    <source>
        <strain>Bristol N2</strain>
    </source>
</reference>
<reference key="2">
    <citation type="journal article" date="1992" name="Nature">
        <title>C. elegans unc-4 gene encodes a homeodomain protein that determines the pattern of synaptic input to specific motor neurons.</title>
        <authorList>
            <person name="Miller D.M. III"/>
            <person name="Shen M.M."/>
            <person name="Shamu C.E."/>
            <person name="Buerglin T.R."/>
            <person name="Ruvkun G."/>
            <person name="Dubois M.L."/>
            <person name="Ghee M."/>
            <person name="Wilson L."/>
        </authorList>
    </citation>
    <scope>NUCLEOTIDE SEQUENCE [MRNA] OF 37-220</scope>
    <scope>FUNCTION</scope>
    <source>
        <strain>Bristol N2</strain>
    </source>
</reference>
<reference key="3">
    <citation type="journal article" date="1989" name="Nature">
        <title>Caenorhabditis elegans has scores of homoeobox-containing genes.</title>
        <authorList>
            <person name="Buerglin T.R."/>
            <person name="Finney M."/>
            <person name="Coulson A."/>
            <person name="Ruvkun G."/>
        </authorList>
    </citation>
    <scope>NUCLEOTIDE SEQUENCE [MRNA] OF 134-147</scope>
</reference>
<reference key="4">
    <citation type="journal article" date="1993" name="Genetics">
        <title>Dominant unc-37 mutations suppress the movement defect of a homeodomain mutation in unc-4, a neural specificity gene in Caenorhabditis elegans.</title>
        <authorList>
            <person name="Miller D.M. III"/>
            <person name="Niemeyer C.J."/>
            <person name="Chitkara P."/>
        </authorList>
    </citation>
    <scope>FUNCTION</scope>
    <scope>INTERACTION WITH UNC-37</scope>
    <scope>MUTAGENESIS OF LEU-121</scope>
    <scope>DISRUPTION PHENOTYPE</scope>
</reference>
<reference key="5">
    <citation type="journal article" date="1995" name="Development">
        <title>Expression of the unc-4 homeoprotein in Caenorhabditis elegans motor neurons specifies presynaptic input.</title>
        <authorList>
            <person name="Miller D.M. III"/>
            <person name="Niemeyer C.J."/>
        </authorList>
    </citation>
    <scope>FUNCTION</scope>
    <scope>TISSUE SPECIFICITY</scope>
    <scope>DEVELOPMENTAL STAGE</scope>
</reference>
<reference key="6">
    <citation type="journal article" date="1997" name="Development">
        <title>The Groucho-like transcription factor UNC-37 functions with the neural specificity gene unc-4 to govern motor neuron identity in C. elegans.</title>
        <authorList>
            <person name="Pflugrad A."/>
            <person name="Meir J.Y.-J."/>
            <person name="Barnes T.M."/>
            <person name="Miller D.M. III"/>
        </authorList>
    </citation>
    <scope>FUNCTION</scope>
</reference>
<reference key="7">
    <citation type="journal article" date="1999" name="Genes Dev.">
        <title>UNC-4/UNC-37-dependent repression of motor neuron-specific genes controls synaptic choice in Caenorhabditis elegans.</title>
        <authorList>
            <person name="Winnier A.R."/>
            <person name="Meir J.Y.-J."/>
            <person name="Ross J.M."/>
            <person name="Tavernarakis N."/>
            <person name="Driscoll M."/>
            <person name="Ishihara T."/>
            <person name="Katsura I."/>
            <person name="Miller D.M. III"/>
        </authorList>
    </citation>
    <scope>FUNCTION</scope>
    <scope>INTERACTION WITH UNC-37</scope>
    <scope>MUTAGENESIS OF PHE-174; GLY-188; ARG-190 AND ARG-197</scope>
</reference>
<reference key="8">
    <citation type="journal article" date="2001" name="J. Neurosci.">
        <title>Regulation of neurotransmitter vesicles by the homeodomain protein UNC-4 and its transcriptional corepressor UNC-37/groucho in Caenorhabditis elegans cholinergic motor neurons.</title>
        <authorList>
            <person name="Lickteig K.M."/>
            <person name="Duerr J.S."/>
            <person name="Frisby D.L."/>
            <person name="Hall D.H."/>
            <person name="Rand J.B."/>
            <person name="Miller D.M. III"/>
        </authorList>
    </citation>
    <scope>FUNCTION</scope>
</reference>
<reference key="9">
    <citation type="journal article" date="2007" name="Genes Dev.">
        <title>UNC-4 represses CEH-12/HB9 to specify synaptic inputs to VA motor neurons in C. elegans.</title>
        <authorList>
            <person name="Von Stetina S.E."/>
            <person name="Fox R.M."/>
            <person name="Watkins K.L."/>
            <person name="Starich T.A."/>
            <person name="Shaw J.E."/>
            <person name="Miller D.M. III"/>
        </authorList>
    </citation>
    <scope>FUNCTION</scope>
</reference>
<reference key="10">
    <citation type="journal article" date="2012" name="Development">
        <title>UNC-4 antagonizes Wnt signaling to regulate synaptic choice in the C. elegans motor circuit.</title>
        <authorList>
            <person name="Schneider J."/>
            <person name="Skelton R.L."/>
            <person name="Von Stetina S.E."/>
            <person name="Middelkoop T.C."/>
            <person name="van Oudenaarden A."/>
            <person name="Korswagen H.C."/>
            <person name="Miller D.M. III"/>
        </authorList>
    </citation>
    <scope>FUNCTION</scope>
    <scope>MUTAGENESIS OF LEU-121 AND ARG-190</scope>
</reference>
<reference evidence="12" key="11">
    <citation type="journal article" date="2017" name="Neuron">
        <title>Diversification of C. elegans Motor Neuron Identity via Selective Effector Gene Repression.</title>
        <authorList>
            <person name="Kerk S.Y."/>
            <person name="Kratsios P."/>
            <person name="Hart M."/>
            <person name="Mourao R."/>
            <person name="Hobert O."/>
        </authorList>
    </citation>
    <scope>FUNCTION</scope>
</reference>
<reference key="12">
    <citation type="journal article" date="2021" name="Elife">
        <title>Sustained expression of unc-4 homeobox gene and unc-37/Groucho in postmitotic neurons specifies the spatial organization of the cholinergic synapses in C. elegans.</title>
        <authorList>
            <person name="Kurashina M."/>
            <person name="Wang J."/>
            <person name="Lin J."/>
            <person name="Lee K.K."/>
            <person name="Johal A."/>
            <person name="Mizumoto K."/>
        </authorList>
    </citation>
    <scope>FUNCTION</scope>
</reference>
<sequence>MIGALHACVDAEPKIINDIWADFWKSQINSVLLNPSDGSETYLASDNGKSTSSREQSTSPDDDNLLMNEDDGIALEDDNDTGESAAKRRRTRTNFSGWQLEELESAFEASHYPDVFMREALAMRLDLLESRVQVWFQNRRAKWRKREQNRNGSSEIKKDDGEQMETKALPTFPFSIDSILAVSRVPRGRRPNAKYPRVQACKNLSPFMIPLFPITQPGGNVIREKSPPLPTQQSQIVATNALTTVAELLKSV</sequence>
<accession>P29506</accession>
<comment type="function">
    <text evidence="3 4 5 6 8 9 10 11">Transcription factor (PubMed:1347150, PubMed:28056346, PubMed:7904971). Involved in motor neuron fate determination and maintenance (PubMed:28056346, PubMed:34388088). In concert with unc-37, represses the expression of VB-specific genes such as ceh-12, thereby preventing the adoption of VB motor neuron fate (PubMed:10557206, PubMed:11245684, PubMed:17289921, PubMed:7904971, PubMed:9165118). Regulates synaptic specificity and the pattern of synaptic input to VA motor neurons, and, depending on context, acting in opposition to, or supported by, Wnt signaling (PubMed:1347150, PubMed:22619391, PubMed:7555714, PubMed:7904971). Required in patterning of the synaptic outputs of the postmitotic DA class cholinergic motor neurons (PubMed:34388088). Acts as a transcriptional repressor to counteract gene activation by transcription factor unc-3 in a subset of motor neurons, probably by binding to specific promoter elements (PubMed:28056346). Has no role in axonal guidance or outgrowth (PubMed:1347150).</text>
</comment>
<comment type="subunit">
    <text evidence="3 10">Interacts with unc-37.</text>
</comment>
<comment type="subcellular location">
    <subcellularLocation>
        <location evidence="12">Nucleus</location>
    </subcellularLocation>
</comment>
<comment type="tissue specificity">
    <text evidence="9">Specifically expressed in all A-type motor neurons (PubMed:7555714). The A-type motor neurons class includes 24 motor neurons; 9 DA, 3 SAB motor neurons that are generated in the embryo and 12 VAs arise after hatching in the first larval stage (PubMed:7555714).</text>
</comment>
<comment type="developmental stage">
    <text evidence="9">Most abundant during embryonic and larval development.</text>
</comment>
<comment type="disruption phenotype">
    <text evidence="10">Worms are unable to crawl backwards because VA motor neurons are miswired with synaptic connections normally reserved for their sister cells, the VB motor neurons.</text>
</comment>
<comment type="similarity">
    <text evidence="12">Belongs to the paired homeobox family. Unc-4 subfamily.</text>
</comment>
<organism>
    <name type="scientific">Caenorhabditis elegans</name>
    <dbReference type="NCBI Taxonomy" id="6239"/>
    <lineage>
        <taxon>Eukaryota</taxon>
        <taxon>Metazoa</taxon>
        <taxon>Ecdysozoa</taxon>
        <taxon>Nematoda</taxon>
        <taxon>Chromadorea</taxon>
        <taxon>Rhabditida</taxon>
        <taxon>Rhabditina</taxon>
        <taxon>Rhabditomorpha</taxon>
        <taxon>Rhabditoidea</taxon>
        <taxon>Rhabditidae</taxon>
        <taxon>Peloderinae</taxon>
        <taxon>Caenorhabditis</taxon>
    </lineage>
</organism>
<protein>
    <recommendedName>
        <fullName>Homeobox protein unc-4</fullName>
    </recommendedName>
    <alternativeName>
        <fullName>Homeobox protein ceh-4</fullName>
    </alternativeName>
    <alternativeName>
        <fullName>Uncoordinated protein 4</fullName>
    </alternativeName>
</protein>
<keyword id="KW-0217">Developmental protein</keyword>
<keyword id="KW-0221">Differentiation</keyword>
<keyword id="KW-0238">DNA-binding</keyword>
<keyword id="KW-0371">Homeobox</keyword>
<keyword id="KW-0524">Neurogenesis</keyword>
<keyword id="KW-0539">Nucleus</keyword>
<keyword id="KW-1185">Reference proteome</keyword>
<keyword id="KW-0678">Repressor</keyword>
<keyword id="KW-0804">Transcription</keyword>
<keyword id="KW-0805">Transcription regulation</keyword>
<evidence type="ECO:0000255" key="1">
    <source>
        <dbReference type="PROSITE-ProRule" id="PRU00108"/>
    </source>
</evidence>
<evidence type="ECO:0000256" key="2">
    <source>
        <dbReference type="SAM" id="MobiDB-lite"/>
    </source>
</evidence>
<evidence type="ECO:0000269" key="3">
    <source>
    </source>
</evidence>
<evidence type="ECO:0000269" key="4">
    <source>
    </source>
</evidence>
<evidence type="ECO:0000269" key="5">
    <source>
    </source>
</evidence>
<evidence type="ECO:0000269" key="6">
    <source>
    </source>
</evidence>
<evidence type="ECO:0000269" key="7">
    <source>
    </source>
</evidence>
<evidence type="ECO:0000269" key="8">
    <source>
    </source>
</evidence>
<evidence type="ECO:0000269" key="9">
    <source>
    </source>
</evidence>
<evidence type="ECO:0000269" key="10">
    <source>
    </source>
</evidence>
<evidence type="ECO:0000269" key="11">
    <source>
    </source>
</evidence>
<evidence type="ECO:0000305" key="12"/>